<proteinExistence type="inferred from homology"/>
<sequence>MKELSSAQIRQMWLDFWKSKGHSVEPSANLVPVNDPTLLWINSGVATLKKYFDGSVIPENPRITNAQKSIRTNDIENVGKTARHHTMFEMLGNFSIGDYFRDEAIEWGFELLTSPEWFDFPKDKLYMTYYPDDKDSYNRWIACGVEPSHLVPIEDNFWEIGAGPSGPDTEIFFDRGEDFDPENIGLRLLAEDIENDRYIEIWNIVLSQFNADPAVPRSEYKELPNKNIDTGAGLERLAAVMQGAKTNFETDLFMPIIREVEKLSGKTYDPDGDNMSFKVIADHIRALSFAIGDGALPGNEGRGYVLRRLLRRAVMHGRRLGINETFLYKLVPTVGQIMESYYPEVLEKRDFIEKIVKREEETFARTIDAGSGHLDSLLAQLKAEGKDTLEGKDIFKLYDTYGFPVELTEELAEDADYKIDHEGFKAAMKEQQDRARAAVVKGGSMGMQNETLAGIVEESRFDYGADSLESNLSVIIADNERTEAVSEGQALLVFAQTPFYAEMGGQVADHGVIKNDKGDTVAEVVDVQKAPNGQPLHTVNVLASLSVGTNYTLEINKERRLAVEKNHTATHLLHAALHNVIGEHATQAGSLNEEEFLRFDFTHFEAVSNEELRHIEQEVNEQIWNDLTITTTETDVETAKEMGAMALFGEKYGKVVRVVQIGNYSVELCGGTHLNNSSEIGLFKIVKEEGIGSGTRRIIAVTGRQAFEAYRNQEDALKEIAATVKAPQLKDAAAKVQALSDSLRDLQKENVELKEKAAAAAAGDVFKDIQEAKGVRFIASQVDVADAGALRTFADNWKQKDYSDVLVLVAAIGEKVNVLVASKTKDVHAGNMIKGLAPIVAGRGGGKPDMAMAGGSDASKIAELLAAVAENL</sequence>
<reference key="1">
    <citation type="journal article" date="2005" name="Proc. Natl. Acad. Sci. U.S.A.">
        <title>Genome analysis of multiple pathogenic isolates of Streptococcus agalactiae: implications for the microbial 'pan-genome'.</title>
        <authorList>
            <person name="Tettelin H."/>
            <person name="Masignani V."/>
            <person name="Cieslewicz M.J."/>
            <person name="Donati C."/>
            <person name="Medini D."/>
            <person name="Ward N.L."/>
            <person name="Angiuoli S.V."/>
            <person name="Crabtree J."/>
            <person name="Jones A.L."/>
            <person name="Durkin A.S."/>
            <person name="DeBoy R.T."/>
            <person name="Davidsen T.M."/>
            <person name="Mora M."/>
            <person name="Scarselli M."/>
            <person name="Margarit y Ros I."/>
            <person name="Peterson J.D."/>
            <person name="Hauser C.R."/>
            <person name="Sundaram J.P."/>
            <person name="Nelson W.C."/>
            <person name="Madupu R."/>
            <person name="Brinkac L.M."/>
            <person name="Dodson R.J."/>
            <person name="Rosovitz M.J."/>
            <person name="Sullivan S.A."/>
            <person name="Daugherty S.C."/>
            <person name="Haft D.H."/>
            <person name="Selengut J."/>
            <person name="Gwinn M.L."/>
            <person name="Zhou L."/>
            <person name="Zafar N."/>
            <person name="Khouri H."/>
            <person name="Radune D."/>
            <person name="Dimitrov G."/>
            <person name="Watkins K."/>
            <person name="O'Connor K.J."/>
            <person name="Smith S."/>
            <person name="Utterback T.R."/>
            <person name="White O."/>
            <person name="Rubens C.E."/>
            <person name="Grandi G."/>
            <person name="Madoff L.C."/>
            <person name="Kasper D.L."/>
            <person name="Telford J.L."/>
            <person name="Wessels M.R."/>
            <person name="Rappuoli R."/>
            <person name="Fraser C.M."/>
        </authorList>
    </citation>
    <scope>NUCLEOTIDE SEQUENCE [LARGE SCALE GENOMIC DNA]</scope>
    <source>
        <strain>ATCC 27591 / A909 / CDC SS700</strain>
    </source>
</reference>
<evidence type="ECO:0000255" key="1">
    <source>
        <dbReference type="HAMAP-Rule" id="MF_00036"/>
    </source>
</evidence>
<keyword id="KW-0030">Aminoacyl-tRNA synthetase</keyword>
<keyword id="KW-0067">ATP-binding</keyword>
<keyword id="KW-0963">Cytoplasm</keyword>
<keyword id="KW-0436">Ligase</keyword>
<keyword id="KW-0479">Metal-binding</keyword>
<keyword id="KW-0547">Nucleotide-binding</keyword>
<keyword id="KW-0648">Protein biosynthesis</keyword>
<keyword id="KW-0694">RNA-binding</keyword>
<keyword id="KW-0820">tRNA-binding</keyword>
<keyword id="KW-0862">Zinc</keyword>
<organism>
    <name type="scientific">Streptococcus agalactiae serotype Ia (strain ATCC 27591 / A909 / CDC SS700)</name>
    <dbReference type="NCBI Taxonomy" id="205921"/>
    <lineage>
        <taxon>Bacteria</taxon>
        <taxon>Bacillati</taxon>
        <taxon>Bacillota</taxon>
        <taxon>Bacilli</taxon>
        <taxon>Lactobacillales</taxon>
        <taxon>Streptococcaceae</taxon>
        <taxon>Streptococcus</taxon>
    </lineage>
</organism>
<comment type="function">
    <text evidence="1">Catalyzes the attachment of alanine to tRNA(Ala) in a two-step reaction: alanine is first activated by ATP to form Ala-AMP and then transferred to the acceptor end of tRNA(Ala). Also edits incorrectly charged Ser-tRNA(Ala) and Gly-tRNA(Ala) via its editing domain.</text>
</comment>
<comment type="catalytic activity">
    <reaction evidence="1">
        <text>tRNA(Ala) + L-alanine + ATP = L-alanyl-tRNA(Ala) + AMP + diphosphate</text>
        <dbReference type="Rhea" id="RHEA:12540"/>
        <dbReference type="Rhea" id="RHEA-COMP:9657"/>
        <dbReference type="Rhea" id="RHEA-COMP:9923"/>
        <dbReference type="ChEBI" id="CHEBI:30616"/>
        <dbReference type="ChEBI" id="CHEBI:33019"/>
        <dbReference type="ChEBI" id="CHEBI:57972"/>
        <dbReference type="ChEBI" id="CHEBI:78442"/>
        <dbReference type="ChEBI" id="CHEBI:78497"/>
        <dbReference type="ChEBI" id="CHEBI:456215"/>
        <dbReference type="EC" id="6.1.1.7"/>
    </reaction>
</comment>
<comment type="cofactor">
    <cofactor evidence="1">
        <name>Zn(2+)</name>
        <dbReference type="ChEBI" id="CHEBI:29105"/>
    </cofactor>
    <text evidence="1">Binds 1 zinc ion per subunit.</text>
</comment>
<comment type="subcellular location">
    <subcellularLocation>
        <location evidence="1">Cytoplasm</location>
    </subcellularLocation>
</comment>
<comment type="domain">
    <text evidence="1">Consists of three domains; the N-terminal catalytic domain, the editing domain and the C-terminal C-Ala domain. The editing domain removes incorrectly charged amino acids, while the C-Ala domain, along with tRNA(Ala), serves as a bridge to cooperatively bring together the editing and aminoacylation centers thus stimulating deacylation of misacylated tRNAs.</text>
</comment>
<comment type="similarity">
    <text evidence="1">Belongs to the class-II aminoacyl-tRNA synthetase family.</text>
</comment>
<dbReference type="EC" id="6.1.1.7" evidence="1"/>
<dbReference type="EMBL" id="CP000114">
    <property type="protein sequence ID" value="ABA46059.1"/>
    <property type="molecule type" value="Genomic_DNA"/>
</dbReference>
<dbReference type="RefSeq" id="WP_000661553.1">
    <property type="nucleotide sequence ID" value="NC_007432.1"/>
</dbReference>
<dbReference type="SMR" id="Q3K1P7"/>
<dbReference type="KEGG" id="sak:SAK_0934"/>
<dbReference type="HOGENOM" id="CLU_004485_1_1_9"/>
<dbReference type="GO" id="GO:0005829">
    <property type="term" value="C:cytosol"/>
    <property type="evidence" value="ECO:0007669"/>
    <property type="project" value="TreeGrafter"/>
</dbReference>
<dbReference type="GO" id="GO:0004813">
    <property type="term" value="F:alanine-tRNA ligase activity"/>
    <property type="evidence" value="ECO:0007669"/>
    <property type="project" value="UniProtKB-UniRule"/>
</dbReference>
<dbReference type="GO" id="GO:0002161">
    <property type="term" value="F:aminoacyl-tRNA deacylase activity"/>
    <property type="evidence" value="ECO:0007669"/>
    <property type="project" value="TreeGrafter"/>
</dbReference>
<dbReference type="GO" id="GO:0005524">
    <property type="term" value="F:ATP binding"/>
    <property type="evidence" value="ECO:0007669"/>
    <property type="project" value="UniProtKB-UniRule"/>
</dbReference>
<dbReference type="GO" id="GO:0140096">
    <property type="term" value="F:catalytic activity, acting on a protein"/>
    <property type="evidence" value="ECO:0007669"/>
    <property type="project" value="UniProtKB-ARBA"/>
</dbReference>
<dbReference type="GO" id="GO:0016740">
    <property type="term" value="F:transferase activity"/>
    <property type="evidence" value="ECO:0007669"/>
    <property type="project" value="UniProtKB-ARBA"/>
</dbReference>
<dbReference type="GO" id="GO:0000049">
    <property type="term" value="F:tRNA binding"/>
    <property type="evidence" value="ECO:0007669"/>
    <property type="project" value="UniProtKB-KW"/>
</dbReference>
<dbReference type="GO" id="GO:0008270">
    <property type="term" value="F:zinc ion binding"/>
    <property type="evidence" value="ECO:0007669"/>
    <property type="project" value="UniProtKB-UniRule"/>
</dbReference>
<dbReference type="GO" id="GO:0006419">
    <property type="term" value="P:alanyl-tRNA aminoacylation"/>
    <property type="evidence" value="ECO:0007669"/>
    <property type="project" value="UniProtKB-UniRule"/>
</dbReference>
<dbReference type="CDD" id="cd00673">
    <property type="entry name" value="AlaRS_core"/>
    <property type="match status" value="1"/>
</dbReference>
<dbReference type="FunFam" id="3.10.310.40:FF:000001">
    <property type="entry name" value="Alanine--tRNA ligase"/>
    <property type="match status" value="1"/>
</dbReference>
<dbReference type="FunFam" id="3.30.54.20:FF:000001">
    <property type="entry name" value="Alanine--tRNA ligase"/>
    <property type="match status" value="1"/>
</dbReference>
<dbReference type="FunFam" id="3.30.930.10:FF:000046">
    <property type="entry name" value="Alanine--tRNA ligase"/>
    <property type="match status" value="1"/>
</dbReference>
<dbReference type="FunFam" id="3.30.980.10:FF:000004">
    <property type="entry name" value="Alanine--tRNA ligase, cytoplasmic"/>
    <property type="match status" value="1"/>
</dbReference>
<dbReference type="Gene3D" id="2.40.30.130">
    <property type="match status" value="1"/>
</dbReference>
<dbReference type="Gene3D" id="3.10.310.40">
    <property type="match status" value="1"/>
</dbReference>
<dbReference type="Gene3D" id="3.30.54.20">
    <property type="match status" value="1"/>
</dbReference>
<dbReference type="Gene3D" id="6.10.250.550">
    <property type="match status" value="1"/>
</dbReference>
<dbReference type="Gene3D" id="3.30.930.10">
    <property type="entry name" value="Bira Bifunctional Protein, Domain 2"/>
    <property type="match status" value="1"/>
</dbReference>
<dbReference type="Gene3D" id="3.30.980.10">
    <property type="entry name" value="Threonyl-trna Synthetase, Chain A, domain 2"/>
    <property type="match status" value="1"/>
</dbReference>
<dbReference type="HAMAP" id="MF_00036_B">
    <property type="entry name" value="Ala_tRNA_synth_B"/>
    <property type="match status" value="1"/>
</dbReference>
<dbReference type="InterPro" id="IPR045864">
    <property type="entry name" value="aa-tRNA-synth_II/BPL/LPL"/>
</dbReference>
<dbReference type="InterPro" id="IPR002318">
    <property type="entry name" value="Ala-tRNA-lgiase_IIc"/>
</dbReference>
<dbReference type="InterPro" id="IPR018162">
    <property type="entry name" value="Ala-tRNA-ligase_IIc_anticod-bd"/>
</dbReference>
<dbReference type="InterPro" id="IPR018165">
    <property type="entry name" value="Ala-tRNA-synth_IIc_core"/>
</dbReference>
<dbReference type="InterPro" id="IPR018164">
    <property type="entry name" value="Ala-tRNA-synth_IIc_N"/>
</dbReference>
<dbReference type="InterPro" id="IPR050058">
    <property type="entry name" value="Ala-tRNA_ligase"/>
</dbReference>
<dbReference type="InterPro" id="IPR023033">
    <property type="entry name" value="Ala_tRNA_ligase_euk/bac"/>
</dbReference>
<dbReference type="InterPro" id="IPR003156">
    <property type="entry name" value="DHHA1_dom"/>
</dbReference>
<dbReference type="InterPro" id="IPR018163">
    <property type="entry name" value="Thr/Ala-tRNA-synth_IIc_edit"/>
</dbReference>
<dbReference type="InterPro" id="IPR009000">
    <property type="entry name" value="Transl_B-barrel_sf"/>
</dbReference>
<dbReference type="InterPro" id="IPR012947">
    <property type="entry name" value="tRNA_SAD"/>
</dbReference>
<dbReference type="NCBIfam" id="TIGR00344">
    <property type="entry name" value="alaS"/>
    <property type="match status" value="1"/>
</dbReference>
<dbReference type="PANTHER" id="PTHR11777:SF9">
    <property type="entry name" value="ALANINE--TRNA LIGASE, CYTOPLASMIC"/>
    <property type="match status" value="1"/>
</dbReference>
<dbReference type="PANTHER" id="PTHR11777">
    <property type="entry name" value="ALANYL-TRNA SYNTHETASE"/>
    <property type="match status" value="1"/>
</dbReference>
<dbReference type="Pfam" id="PF02272">
    <property type="entry name" value="DHHA1"/>
    <property type="match status" value="1"/>
</dbReference>
<dbReference type="Pfam" id="PF01411">
    <property type="entry name" value="tRNA-synt_2c"/>
    <property type="match status" value="1"/>
</dbReference>
<dbReference type="Pfam" id="PF07973">
    <property type="entry name" value="tRNA_SAD"/>
    <property type="match status" value="1"/>
</dbReference>
<dbReference type="PRINTS" id="PR00980">
    <property type="entry name" value="TRNASYNTHALA"/>
</dbReference>
<dbReference type="SMART" id="SM00863">
    <property type="entry name" value="tRNA_SAD"/>
    <property type="match status" value="1"/>
</dbReference>
<dbReference type="SUPFAM" id="SSF55681">
    <property type="entry name" value="Class II aaRS and biotin synthetases"/>
    <property type="match status" value="1"/>
</dbReference>
<dbReference type="SUPFAM" id="SSF101353">
    <property type="entry name" value="Putative anticodon-binding domain of alanyl-tRNA synthetase (AlaRS)"/>
    <property type="match status" value="1"/>
</dbReference>
<dbReference type="SUPFAM" id="SSF55186">
    <property type="entry name" value="ThrRS/AlaRS common domain"/>
    <property type="match status" value="1"/>
</dbReference>
<dbReference type="SUPFAM" id="SSF50447">
    <property type="entry name" value="Translation proteins"/>
    <property type="match status" value="1"/>
</dbReference>
<dbReference type="PROSITE" id="PS50860">
    <property type="entry name" value="AA_TRNA_LIGASE_II_ALA"/>
    <property type="match status" value="1"/>
</dbReference>
<feature type="chain" id="PRO_0000347817" description="Alanine--tRNA ligase">
    <location>
        <begin position="1"/>
        <end position="872"/>
    </location>
</feature>
<feature type="binding site" evidence="1">
    <location>
        <position position="567"/>
    </location>
    <ligand>
        <name>Zn(2+)</name>
        <dbReference type="ChEBI" id="CHEBI:29105"/>
    </ligand>
</feature>
<feature type="binding site" evidence="1">
    <location>
        <position position="571"/>
    </location>
    <ligand>
        <name>Zn(2+)</name>
        <dbReference type="ChEBI" id="CHEBI:29105"/>
    </ligand>
</feature>
<feature type="binding site" evidence="1">
    <location>
        <position position="669"/>
    </location>
    <ligand>
        <name>Zn(2+)</name>
        <dbReference type="ChEBI" id="CHEBI:29105"/>
    </ligand>
</feature>
<feature type="binding site" evidence="1">
    <location>
        <position position="673"/>
    </location>
    <ligand>
        <name>Zn(2+)</name>
        <dbReference type="ChEBI" id="CHEBI:29105"/>
    </ligand>
</feature>
<name>SYA_STRA1</name>
<protein>
    <recommendedName>
        <fullName evidence="1">Alanine--tRNA ligase</fullName>
        <ecNumber evidence="1">6.1.1.7</ecNumber>
    </recommendedName>
    <alternativeName>
        <fullName evidence="1">Alanyl-tRNA synthetase</fullName>
        <shortName evidence="1">AlaRS</shortName>
    </alternativeName>
</protein>
<accession>Q3K1P7</accession>
<gene>
    <name evidence="1" type="primary">alaS</name>
    <name type="ordered locus">SAK_0934</name>
</gene>